<comment type="catalytic activity">
    <reaction evidence="1">
        <text>urea + 2 H2O + H(+) = hydrogencarbonate + 2 NH4(+)</text>
        <dbReference type="Rhea" id="RHEA:20557"/>
        <dbReference type="ChEBI" id="CHEBI:15377"/>
        <dbReference type="ChEBI" id="CHEBI:15378"/>
        <dbReference type="ChEBI" id="CHEBI:16199"/>
        <dbReference type="ChEBI" id="CHEBI:17544"/>
        <dbReference type="ChEBI" id="CHEBI:28938"/>
        <dbReference type="EC" id="3.5.1.5"/>
    </reaction>
</comment>
<comment type="pathway">
    <text evidence="1">Nitrogen metabolism; urea degradation; CO(2) and NH(3) from urea (urease route): step 1/1.</text>
</comment>
<comment type="subunit">
    <text evidence="1">Heterohexamer of 3 UreA (alpha) and 3 UreB (beta) subunits. Four heterohexamers assemble to form a 16 nm dodecameric complex (By similarity).</text>
</comment>
<comment type="similarity">
    <text evidence="1">In the N-terminal section; belongs to the urease gamma subunit family.</text>
</comment>
<comment type="similarity">
    <text evidence="1">In the C-terminal section; belongs to the urease beta subunit family.</text>
</comment>
<comment type="caution">
    <text evidence="2">The orthologous protein is known as the gamma/beta subunit (UreAB) in most other bacteria.</text>
</comment>
<sequence length="238" mass="26568">MKLTPKELDKLMLHYAGELARKRKEKGIKLNYVEAVALISAHIMEEARAGKKTAAELMQEGRTLLKPDDVMDGVASMIHEVGIEAMFPDGTKLVTVHTPIEANGKLVPGELFLKNEDITINEGKKAVSVKVKNVGDRPVQIGSHFHFFEVNRCLDFDREKTFGKRLDIASGTAVRFEPGEEKSVELIDIGGNRRIFGFNALVDRQADNESKKIALHRAKERGFHGAKSDDNYVKTIKE</sequence>
<gene>
    <name evidence="1" type="primary">ureA</name>
    <name type="synonym">hpuA</name>
    <name type="ordered locus">jhp_0068</name>
</gene>
<evidence type="ECO:0000255" key="1">
    <source>
        <dbReference type="HAMAP-Rule" id="MF_01955"/>
    </source>
</evidence>
<evidence type="ECO:0000305" key="2"/>
<feature type="chain" id="PRO_0000098074" description="Urease subunit alpha">
    <location>
        <begin position="1"/>
        <end position="238"/>
    </location>
</feature>
<feature type="region of interest" description="Urease gamma">
    <location>
        <begin position="1"/>
        <end position="102"/>
    </location>
</feature>
<feature type="region of interest" description="Urease beta">
    <location>
        <begin position="103"/>
        <end position="238"/>
    </location>
</feature>
<reference key="1">
    <citation type="journal article" date="1999" name="Nature">
        <title>Genomic sequence comparison of two unrelated isolates of the human gastric pathogen Helicobacter pylori.</title>
        <authorList>
            <person name="Alm R.A."/>
            <person name="Ling L.-S.L."/>
            <person name="Moir D.T."/>
            <person name="King B.L."/>
            <person name="Brown E.D."/>
            <person name="Doig P.C."/>
            <person name="Smith D.R."/>
            <person name="Noonan B."/>
            <person name="Guild B.C."/>
            <person name="deJonge B.L."/>
            <person name="Carmel G."/>
            <person name="Tummino P.J."/>
            <person name="Caruso A."/>
            <person name="Uria-Nickelsen M."/>
            <person name="Mills D.M."/>
            <person name="Ives C."/>
            <person name="Gibson R."/>
            <person name="Merberg D."/>
            <person name="Mills S.D."/>
            <person name="Jiang Q."/>
            <person name="Taylor D.E."/>
            <person name="Vovis G.F."/>
            <person name="Trust T.J."/>
        </authorList>
    </citation>
    <scope>NUCLEOTIDE SEQUENCE [LARGE SCALE GENOMIC DNA]</scope>
    <source>
        <strain>J99 / ATCC 700824</strain>
    </source>
</reference>
<proteinExistence type="inferred from homology"/>
<name>URE23_HELPJ</name>
<protein>
    <recommendedName>
        <fullName evidence="1">Urease subunit alpha</fullName>
        <ecNumber evidence="1">3.5.1.5</ecNumber>
    </recommendedName>
    <alternativeName>
        <fullName evidence="1">Urea amidohydrolase subunit alpha</fullName>
    </alternativeName>
</protein>
<organism>
    <name type="scientific">Helicobacter pylori (strain J99 / ATCC 700824)</name>
    <name type="common">Campylobacter pylori J99</name>
    <dbReference type="NCBI Taxonomy" id="85963"/>
    <lineage>
        <taxon>Bacteria</taxon>
        <taxon>Pseudomonadati</taxon>
        <taxon>Campylobacterota</taxon>
        <taxon>Epsilonproteobacteria</taxon>
        <taxon>Campylobacterales</taxon>
        <taxon>Helicobacteraceae</taxon>
        <taxon>Helicobacter</taxon>
    </lineage>
</organism>
<accession>Q9ZMZ4</accession>
<dbReference type="EC" id="3.5.1.5" evidence="1"/>
<dbReference type="EMBL" id="AE001439">
    <property type="protein sequence ID" value="AAD05652.1"/>
    <property type="molecule type" value="Genomic_DNA"/>
</dbReference>
<dbReference type="PIR" id="B71977">
    <property type="entry name" value="B71977"/>
</dbReference>
<dbReference type="RefSeq" id="WP_000779233.1">
    <property type="nucleotide sequence ID" value="NZ_CP011330.1"/>
</dbReference>
<dbReference type="SMR" id="Q9ZMZ4"/>
<dbReference type="IntAct" id="Q9ZMZ4">
    <property type="interactions" value="1"/>
</dbReference>
<dbReference type="KEGG" id="hpj:jhp_0068"/>
<dbReference type="PATRIC" id="fig|85963.30.peg.966"/>
<dbReference type="eggNOG" id="COG0831">
    <property type="taxonomic scope" value="Bacteria"/>
</dbReference>
<dbReference type="eggNOG" id="COG0832">
    <property type="taxonomic scope" value="Bacteria"/>
</dbReference>
<dbReference type="UniPathway" id="UPA00258">
    <property type="reaction ID" value="UER00370"/>
</dbReference>
<dbReference type="Proteomes" id="UP000000804">
    <property type="component" value="Chromosome"/>
</dbReference>
<dbReference type="GO" id="GO:0035550">
    <property type="term" value="C:urease complex"/>
    <property type="evidence" value="ECO:0007669"/>
    <property type="project" value="InterPro"/>
</dbReference>
<dbReference type="GO" id="GO:0016151">
    <property type="term" value="F:nickel cation binding"/>
    <property type="evidence" value="ECO:0007669"/>
    <property type="project" value="InterPro"/>
</dbReference>
<dbReference type="GO" id="GO:0009039">
    <property type="term" value="F:urease activity"/>
    <property type="evidence" value="ECO:0007669"/>
    <property type="project" value="UniProtKB-UniRule"/>
</dbReference>
<dbReference type="GO" id="GO:0043419">
    <property type="term" value="P:urea catabolic process"/>
    <property type="evidence" value="ECO:0007669"/>
    <property type="project" value="UniProtKB-UniRule"/>
</dbReference>
<dbReference type="CDD" id="cd00407">
    <property type="entry name" value="Urease_beta"/>
    <property type="match status" value="1"/>
</dbReference>
<dbReference type="CDD" id="cd00390">
    <property type="entry name" value="Urease_gamma"/>
    <property type="match status" value="1"/>
</dbReference>
<dbReference type="FunFam" id="3.30.280.10:FF:000001">
    <property type="entry name" value="Urease subunit alpha"/>
    <property type="match status" value="1"/>
</dbReference>
<dbReference type="FunFam" id="2.10.150.10:FF:000001">
    <property type="entry name" value="Urease subunit beta"/>
    <property type="match status" value="1"/>
</dbReference>
<dbReference type="Gene3D" id="2.10.150.10">
    <property type="entry name" value="Urease, beta subunit"/>
    <property type="match status" value="1"/>
</dbReference>
<dbReference type="Gene3D" id="3.30.280.10">
    <property type="entry name" value="Urease, gamma-like subunit"/>
    <property type="match status" value="1"/>
</dbReference>
<dbReference type="HAMAP" id="MF_01954">
    <property type="entry name" value="Urease_beta"/>
    <property type="match status" value="1"/>
</dbReference>
<dbReference type="HAMAP" id="MF_01955">
    <property type="entry name" value="Urease_beta_gamma"/>
    <property type="match status" value="1"/>
</dbReference>
<dbReference type="InterPro" id="IPR002019">
    <property type="entry name" value="Urease_beta-like"/>
</dbReference>
<dbReference type="InterPro" id="IPR036461">
    <property type="entry name" value="Urease_betasu_sf"/>
</dbReference>
<dbReference type="InterPro" id="IPR008223">
    <property type="entry name" value="Urease_gamma-beta_su"/>
</dbReference>
<dbReference type="InterPro" id="IPR002026">
    <property type="entry name" value="Urease_gamma/gamma-beta_su"/>
</dbReference>
<dbReference type="InterPro" id="IPR036463">
    <property type="entry name" value="Urease_gamma_sf"/>
</dbReference>
<dbReference type="InterPro" id="IPR050069">
    <property type="entry name" value="Urease_subunit"/>
</dbReference>
<dbReference type="NCBIfam" id="NF009671">
    <property type="entry name" value="PRK13192.1"/>
    <property type="match status" value="1"/>
</dbReference>
<dbReference type="NCBIfam" id="NF009682">
    <property type="entry name" value="PRK13203.1"/>
    <property type="match status" value="1"/>
</dbReference>
<dbReference type="NCBIfam" id="NF009712">
    <property type="entry name" value="PRK13241.1"/>
    <property type="match status" value="1"/>
</dbReference>
<dbReference type="NCBIfam" id="NF010592">
    <property type="entry name" value="PRK13986.1"/>
    <property type="match status" value="1"/>
</dbReference>
<dbReference type="NCBIfam" id="TIGR00192">
    <property type="entry name" value="urease_beta"/>
    <property type="match status" value="1"/>
</dbReference>
<dbReference type="NCBIfam" id="TIGR00193">
    <property type="entry name" value="urease_gam"/>
    <property type="match status" value="1"/>
</dbReference>
<dbReference type="PANTHER" id="PTHR33569">
    <property type="entry name" value="UREASE"/>
    <property type="match status" value="1"/>
</dbReference>
<dbReference type="PANTHER" id="PTHR33569:SF1">
    <property type="entry name" value="UREASE"/>
    <property type="match status" value="1"/>
</dbReference>
<dbReference type="Pfam" id="PF00699">
    <property type="entry name" value="Urease_beta"/>
    <property type="match status" value="1"/>
</dbReference>
<dbReference type="Pfam" id="PF00547">
    <property type="entry name" value="Urease_gamma"/>
    <property type="match status" value="1"/>
</dbReference>
<dbReference type="PIRSF" id="PIRSF001225">
    <property type="entry name" value="Urease_gammabeta"/>
    <property type="match status" value="1"/>
</dbReference>
<dbReference type="SUPFAM" id="SSF51278">
    <property type="entry name" value="Urease, beta-subunit"/>
    <property type="match status" value="1"/>
</dbReference>
<dbReference type="SUPFAM" id="SSF54111">
    <property type="entry name" value="Urease, gamma-subunit"/>
    <property type="match status" value="1"/>
</dbReference>
<keyword id="KW-0378">Hydrolase</keyword>